<keyword id="KW-0002">3D-structure</keyword>
<keyword id="KW-0025">Alternative splicing</keyword>
<keyword id="KW-0496">Mitochondrion</keyword>
<keyword id="KW-1267">Proteomics identification</keyword>
<keyword id="KW-1185">Reference proteome</keyword>
<keyword id="KW-0687">Ribonucleoprotein</keyword>
<keyword id="KW-0689">Ribosomal protein</keyword>
<dbReference type="EMBL" id="AB049940">
    <property type="protein sequence ID" value="BAB40993.1"/>
    <property type="molecule type" value="mRNA"/>
</dbReference>
<dbReference type="EMBL" id="AK058160">
    <property type="protein sequence ID" value="BAB71695.1"/>
    <property type="molecule type" value="mRNA"/>
</dbReference>
<dbReference type="EMBL" id="AC092835">
    <property type="protein sequence ID" value="AAX88980.1"/>
    <property type="molecule type" value="Genomic_DNA"/>
</dbReference>
<dbReference type="EMBL" id="CH471219">
    <property type="protein sequence ID" value="EAX10712.1"/>
    <property type="molecule type" value="Genomic_DNA"/>
</dbReference>
<dbReference type="EMBL" id="BC000219">
    <property type="protein sequence ID" value="AAH00219.2"/>
    <property type="molecule type" value="mRNA"/>
</dbReference>
<dbReference type="EMBL" id="BC014172">
    <property type="protein sequence ID" value="AAH14172.1"/>
    <property type="molecule type" value="mRNA"/>
</dbReference>
<dbReference type="CCDS" id="CCDS2010.1">
    <molecule id="P82675-1"/>
</dbReference>
<dbReference type="RefSeq" id="NP_114108.1">
    <molecule id="P82675-1"/>
    <property type="nucleotide sequence ID" value="NM_031902.5"/>
</dbReference>
<dbReference type="PDB" id="3J9M">
    <property type="method" value="EM"/>
    <property type="resolution" value="3.50 A"/>
    <property type="chains" value="AD=1-430"/>
</dbReference>
<dbReference type="PDB" id="6NU2">
    <property type="method" value="EM"/>
    <property type="resolution" value="3.90 A"/>
    <property type="chains" value="AD=88-430"/>
</dbReference>
<dbReference type="PDB" id="6NU3">
    <property type="method" value="EM"/>
    <property type="resolution" value="4.40 A"/>
    <property type="chains" value="AD=1-430"/>
</dbReference>
<dbReference type="PDB" id="6RW4">
    <property type="method" value="EM"/>
    <property type="resolution" value="2.97 A"/>
    <property type="chains" value="D=1-430"/>
</dbReference>
<dbReference type="PDB" id="6RW5">
    <property type="method" value="EM"/>
    <property type="resolution" value="3.14 A"/>
    <property type="chains" value="D=1-430"/>
</dbReference>
<dbReference type="PDB" id="6VLZ">
    <property type="method" value="EM"/>
    <property type="resolution" value="2.97 A"/>
    <property type="chains" value="AD=1-430"/>
</dbReference>
<dbReference type="PDB" id="6VMI">
    <property type="method" value="EM"/>
    <property type="resolution" value="2.96 A"/>
    <property type="chains" value="AD=1-430"/>
</dbReference>
<dbReference type="PDB" id="6ZM5">
    <property type="method" value="EM"/>
    <property type="resolution" value="2.89 A"/>
    <property type="chains" value="AD=1-430"/>
</dbReference>
<dbReference type="PDB" id="6ZM6">
    <property type="method" value="EM"/>
    <property type="resolution" value="2.59 A"/>
    <property type="chains" value="AD=1-430"/>
</dbReference>
<dbReference type="PDB" id="6ZS9">
    <property type="method" value="EM"/>
    <property type="resolution" value="4.00 A"/>
    <property type="chains" value="AD=1-430"/>
</dbReference>
<dbReference type="PDB" id="6ZSA">
    <property type="method" value="EM"/>
    <property type="resolution" value="4.00 A"/>
    <property type="chains" value="AD=1-430"/>
</dbReference>
<dbReference type="PDB" id="6ZSB">
    <property type="method" value="EM"/>
    <property type="resolution" value="4.50 A"/>
    <property type="chains" value="AD=1-430"/>
</dbReference>
<dbReference type="PDB" id="6ZSC">
    <property type="method" value="EM"/>
    <property type="resolution" value="3.50 A"/>
    <property type="chains" value="AD=1-430"/>
</dbReference>
<dbReference type="PDB" id="6ZSD">
    <property type="method" value="EM"/>
    <property type="resolution" value="3.70 A"/>
    <property type="chains" value="AD=1-430"/>
</dbReference>
<dbReference type="PDB" id="6ZSE">
    <property type="method" value="EM"/>
    <property type="resolution" value="5.00 A"/>
    <property type="chains" value="AD=1-430"/>
</dbReference>
<dbReference type="PDB" id="6ZSG">
    <property type="method" value="EM"/>
    <property type="resolution" value="4.00 A"/>
    <property type="chains" value="AD=1-430"/>
</dbReference>
<dbReference type="PDB" id="7A5F">
    <property type="method" value="EM"/>
    <property type="resolution" value="4.40 A"/>
    <property type="chains" value="D6=1-430"/>
</dbReference>
<dbReference type="PDB" id="7A5G">
    <property type="method" value="EM"/>
    <property type="resolution" value="4.33 A"/>
    <property type="chains" value="D6=1-430"/>
</dbReference>
<dbReference type="PDB" id="7A5I">
    <property type="method" value="EM"/>
    <property type="resolution" value="3.70 A"/>
    <property type="chains" value="D6=1-430"/>
</dbReference>
<dbReference type="PDB" id="7A5K">
    <property type="method" value="EM"/>
    <property type="resolution" value="3.70 A"/>
    <property type="chains" value="D6=1-430"/>
</dbReference>
<dbReference type="PDB" id="7L08">
    <property type="method" value="EM"/>
    <property type="resolution" value="3.49 A"/>
    <property type="chains" value="AD=1-430"/>
</dbReference>
<dbReference type="PDB" id="7OG4">
    <property type="method" value="EM"/>
    <property type="resolution" value="3.80 A"/>
    <property type="chains" value="AD=1-430"/>
</dbReference>
<dbReference type="PDB" id="7P2E">
    <property type="method" value="EM"/>
    <property type="resolution" value="2.40 A"/>
    <property type="chains" value="D=1-430"/>
</dbReference>
<dbReference type="PDB" id="7PNX">
    <property type="method" value="EM"/>
    <property type="resolution" value="2.76 A"/>
    <property type="chains" value="D=1-430"/>
</dbReference>
<dbReference type="PDB" id="7PNY">
    <property type="method" value="EM"/>
    <property type="resolution" value="3.06 A"/>
    <property type="chains" value="D=1-430"/>
</dbReference>
<dbReference type="PDB" id="7PNZ">
    <property type="method" value="EM"/>
    <property type="resolution" value="3.09 A"/>
    <property type="chains" value="D=1-430"/>
</dbReference>
<dbReference type="PDB" id="7PO0">
    <property type="method" value="EM"/>
    <property type="resolution" value="2.90 A"/>
    <property type="chains" value="D=1-430"/>
</dbReference>
<dbReference type="PDB" id="7PO1">
    <property type="method" value="EM"/>
    <property type="resolution" value="2.92 A"/>
    <property type="chains" value="D=1-430"/>
</dbReference>
<dbReference type="PDB" id="7PO2">
    <property type="method" value="EM"/>
    <property type="resolution" value="3.09 A"/>
    <property type="chains" value="D=1-430"/>
</dbReference>
<dbReference type="PDB" id="7PO3">
    <property type="method" value="EM"/>
    <property type="resolution" value="2.92 A"/>
    <property type="chains" value="D=1-430"/>
</dbReference>
<dbReference type="PDB" id="7QI4">
    <property type="method" value="EM"/>
    <property type="resolution" value="2.21 A"/>
    <property type="chains" value="AD=1-430"/>
</dbReference>
<dbReference type="PDB" id="7QI5">
    <property type="method" value="EM"/>
    <property type="resolution" value="2.63 A"/>
    <property type="chains" value="AD=1-430"/>
</dbReference>
<dbReference type="PDB" id="7QI6">
    <property type="method" value="EM"/>
    <property type="resolution" value="2.98 A"/>
    <property type="chains" value="AD=1-430"/>
</dbReference>
<dbReference type="PDB" id="8ANY">
    <property type="method" value="EM"/>
    <property type="resolution" value="2.85 A"/>
    <property type="chains" value="AD=1-430"/>
</dbReference>
<dbReference type="PDB" id="8CSP">
    <property type="method" value="EM"/>
    <property type="resolution" value="2.66 A"/>
    <property type="chains" value="D=1-430"/>
</dbReference>
<dbReference type="PDB" id="8CSQ">
    <property type="method" value="EM"/>
    <property type="resolution" value="2.54 A"/>
    <property type="chains" value="D=1-430"/>
</dbReference>
<dbReference type="PDB" id="8CSR">
    <property type="method" value="EM"/>
    <property type="resolution" value="2.54 A"/>
    <property type="chains" value="D=1-430"/>
</dbReference>
<dbReference type="PDB" id="8CSS">
    <property type="method" value="EM"/>
    <property type="resolution" value="2.36 A"/>
    <property type="chains" value="D=1-430"/>
</dbReference>
<dbReference type="PDB" id="8CST">
    <property type="method" value="EM"/>
    <property type="resolution" value="2.85 A"/>
    <property type="chains" value="D=1-430"/>
</dbReference>
<dbReference type="PDB" id="8CSU">
    <property type="method" value="EM"/>
    <property type="resolution" value="3.03 A"/>
    <property type="chains" value="D=1-430"/>
</dbReference>
<dbReference type="PDB" id="8K2A">
    <property type="method" value="EM"/>
    <property type="resolution" value="2.90 A"/>
    <property type="chains" value="SE=1-430"/>
</dbReference>
<dbReference type="PDB" id="8OIR">
    <property type="method" value="EM"/>
    <property type="resolution" value="3.10 A"/>
    <property type="chains" value="Ad=1-430"/>
</dbReference>
<dbReference type="PDB" id="8OIS">
    <property type="method" value="EM"/>
    <property type="resolution" value="3.00 A"/>
    <property type="chains" value="Ad=1-430"/>
</dbReference>
<dbReference type="PDB" id="8QRK">
    <property type="method" value="EM"/>
    <property type="resolution" value="6.69 A"/>
    <property type="chains" value="D=1-430"/>
</dbReference>
<dbReference type="PDB" id="8QRL">
    <property type="method" value="EM"/>
    <property type="resolution" value="3.34 A"/>
    <property type="chains" value="D=1-430"/>
</dbReference>
<dbReference type="PDB" id="8QRM">
    <property type="method" value="EM"/>
    <property type="resolution" value="3.05 A"/>
    <property type="chains" value="D=1-430"/>
</dbReference>
<dbReference type="PDB" id="8QRN">
    <property type="method" value="EM"/>
    <property type="resolution" value="2.98 A"/>
    <property type="chains" value="D=1-430"/>
</dbReference>
<dbReference type="PDB" id="8RRI">
    <property type="method" value="EM"/>
    <property type="resolution" value="2.40 A"/>
    <property type="chains" value="AD=1-430"/>
</dbReference>
<dbReference type="PDB" id="8XT0">
    <property type="method" value="EM"/>
    <property type="resolution" value="3.20 A"/>
    <property type="chains" value="SE=1-430"/>
</dbReference>
<dbReference type="PDB" id="8XT2">
    <property type="method" value="EM"/>
    <property type="resolution" value="3.30 A"/>
    <property type="chains" value="SE=1-430"/>
</dbReference>
<dbReference type="PDBsum" id="3J9M"/>
<dbReference type="PDBsum" id="6NU2"/>
<dbReference type="PDBsum" id="6NU3"/>
<dbReference type="PDBsum" id="6RW4"/>
<dbReference type="PDBsum" id="6RW5"/>
<dbReference type="PDBsum" id="6VLZ"/>
<dbReference type="PDBsum" id="6VMI"/>
<dbReference type="PDBsum" id="6ZM5"/>
<dbReference type="PDBsum" id="6ZM6"/>
<dbReference type="PDBsum" id="6ZS9"/>
<dbReference type="PDBsum" id="6ZSA"/>
<dbReference type="PDBsum" id="6ZSB"/>
<dbReference type="PDBsum" id="6ZSC"/>
<dbReference type="PDBsum" id="6ZSD"/>
<dbReference type="PDBsum" id="6ZSE"/>
<dbReference type="PDBsum" id="6ZSG"/>
<dbReference type="PDBsum" id="7A5F"/>
<dbReference type="PDBsum" id="7A5G"/>
<dbReference type="PDBsum" id="7A5I"/>
<dbReference type="PDBsum" id="7A5K"/>
<dbReference type="PDBsum" id="7L08"/>
<dbReference type="PDBsum" id="7OG4"/>
<dbReference type="PDBsum" id="7P2E"/>
<dbReference type="PDBsum" id="7PNX"/>
<dbReference type="PDBsum" id="7PNY"/>
<dbReference type="PDBsum" id="7PNZ"/>
<dbReference type="PDBsum" id="7PO0"/>
<dbReference type="PDBsum" id="7PO1"/>
<dbReference type="PDBsum" id="7PO2"/>
<dbReference type="PDBsum" id="7PO3"/>
<dbReference type="PDBsum" id="7QI4"/>
<dbReference type="PDBsum" id="7QI5"/>
<dbReference type="PDBsum" id="7QI6"/>
<dbReference type="PDBsum" id="8ANY"/>
<dbReference type="PDBsum" id="8CSP"/>
<dbReference type="PDBsum" id="8CSQ"/>
<dbReference type="PDBsum" id="8CSR"/>
<dbReference type="PDBsum" id="8CSS"/>
<dbReference type="PDBsum" id="8CST"/>
<dbReference type="PDBsum" id="8CSU"/>
<dbReference type="PDBsum" id="8K2A"/>
<dbReference type="PDBsum" id="8OIR"/>
<dbReference type="PDBsum" id="8OIS"/>
<dbReference type="PDBsum" id="8QRK"/>
<dbReference type="PDBsum" id="8QRL"/>
<dbReference type="PDBsum" id="8QRM"/>
<dbReference type="PDBsum" id="8QRN"/>
<dbReference type="PDBsum" id="8RRI"/>
<dbReference type="PDBsum" id="8XT0"/>
<dbReference type="PDBsum" id="8XT2"/>
<dbReference type="EMDB" id="EMD-0514"/>
<dbReference type="EMDB" id="EMD-0515"/>
<dbReference type="EMDB" id="EMD-10021"/>
<dbReference type="EMDB" id="EMD-10022"/>
<dbReference type="EMDB" id="EMD-11278"/>
<dbReference type="EMDB" id="EMD-11279"/>
<dbReference type="EMDB" id="EMD-11390"/>
<dbReference type="EMDB" id="EMD-11391"/>
<dbReference type="EMDB" id="EMD-11392"/>
<dbReference type="EMDB" id="EMD-11393"/>
<dbReference type="EMDB" id="EMD-11394"/>
<dbReference type="EMDB" id="EMD-11395"/>
<dbReference type="EMDB" id="EMD-11397"/>
<dbReference type="EMDB" id="EMD-11641"/>
<dbReference type="EMDB" id="EMD-11642"/>
<dbReference type="EMDB" id="EMD-11644"/>
<dbReference type="EMDB" id="EMD-11646"/>
<dbReference type="EMDB" id="EMD-12877"/>
<dbReference type="EMDB" id="EMD-13170"/>
<dbReference type="EMDB" id="EMD-13555"/>
<dbReference type="EMDB" id="EMD-13556"/>
<dbReference type="EMDB" id="EMD-13557"/>
<dbReference type="EMDB" id="EMD-13558"/>
<dbReference type="EMDB" id="EMD-13559"/>
<dbReference type="EMDB" id="EMD-13560"/>
<dbReference type="EMDB" id="EMD-13561"/>
<dbReference type="EMDB" id="EMD-13980"/>
<dbReference type="EMDB" id="EMD-13981"/>
<dbReference type="EMDB" id="EMD-13982"/>
<dbReference type="EMDB" id="EMD-15544"/>
<dbReference type="EMDB" id="EMD-16897"/>
<dbReference type="EMDB" id="EMD-16898"/>
<dbReference type="EMDB" id="EMD-19460"/>
<dbReference type="EMDB" id="EMD-21233"/>
<dbReference type="EMDB" id="EMD-21242"/>
<dbReference type="EMDB" id="EMD-23096"/>
<dbReference type="EMDB" id="EMD-26966"/>
<dbReference type="EMDB" id="EMD-26967"/>
<dbReference type="EMDB" id="EMD-26968"/>
<dbReference type="EMDB" id="EMD-26969"/>
<dbReference type="EMDB" id="EMD-26970"/>
<dbReference type="EMDB" id="EMD-26971"/>
<dbReference type="EMDB" id="EMD-36836"/>
<dbReference type="EMDB" id="EMD-38632"/>
<dbReference type="EMDB" id="EMD-38634"/>
<dbReference type="SMR" id="P82675"/>
<dbReference type="BioGRID" id="122362">
    <property type="interactions" value="361"/>
</dbReference>
<dbReference type="ComplexPortal" id="CPX-5225">
    <property type="entry name" value="28S mitochondrial small ribosomal subunit"/>
</dbReference>
<dbReference type="CORUM" id="P82675"/>
<dbReference type="FunCoup" id="P82675">
    <property type="interactions" value="1538"/>
</dbReference>
<dbReference type="IntAct" id="P82675">
    <property type="interactions" value="160"/>
</dbReference>
<dbReference type="MINT" id="P82675"/>
<dbReference type="STRING" id="9606.ENSP00000272418"/>
<dbReference type="GlyGen" id="P82675">
    <property type="glycosylation" value="4 sites, 1 O-linked glycan (4 sites)"/>
</dbReference>
<dbReference type="iPTMnet" id="P82675"/>
<dbReference type="MetOSite" id="P82675"/>
<dbReference type="PhosphoSitePlus" id="P82675"/>
<dbReference type="SwissPalm" id="P82675"/>
<dbReference type="BioMuta" id="MRPS5"/>
<dbReference type="DMDM" id="24212347"/>
<dbReference type="jPOST" id="P82675"/>
<dbReference type="MassIVE" id="P82675"/>
<dbReference type="PaxDb" id="9606-ENSP00000272418"/>
<dbReference type="PeptideAtlas" id="P82675"/>
<dbReference type="ProteomicsDB" id="57714">
    <molecule id="P82675-1"/>
</dbReference>
<dbReference type="ProteomicsDB" id="57715">
    <molecule id="P82675-2"/>
</dbReference>
<dbReference type="Pumba" id="P82675"/>
<dbReference type="Antibodypedia" id="32295">
    <property type="antibodies" value="123 antibodies from 24 providers"/>
</dbReference>
<dbReference type="DNASU" id="64969"/>
<dbReference type="Ensembl" id="ENST00000272418.7">
    <molecule id="P82675-1"/>
    <property type="protein sequence ID" value="ENSP00000272418.2"/>
    <property type="gene ID" value="ENSG00000144029.14"/>
</dbReference>
<dbReference type="Ensembl" id="ENST00000345084.11">
    <molecule id="P82675-2"/>
    <property type="protein sequence ID" value="ENSP00000341660.5"/>
    <property type="gene ID" value="ENSG00000144029.14"/>
</dbReference>
<dbReference type="GeneID" id="64969"/>
<dbReference type="KEGG" id="hsa:64969"/>
<dbReference type="MANE-Select" id="ENST00000272418.7">
    <property type="protein sequence ID" value="ENSP00000272418.2"/>
    <property type="RefSeq nucleotide sequence ID" value="NM_031902.5"/>
    <property type="RefSeq protein sequence ID" value="NP_114108.1"/>
</dbReference>
<dbReference type="UCSC" id="uc002sub.4">
    <molecule id="P82675-1"/>
    <property type="organism name" value="human"/>
</dbReference>
<dbReference type="AGR" id="HGNC:14498"/>
<dbReference type="CTD" id="64969"/>
<dbReference type="DisGeNET" id="64969"/>
<dbReference type="GeneCards" id="MRPS5"/>
<dbReference type="HGNC" id="HGNC:14498">
    <property type="gene designation" value="MRPS5"/>
</dbReference>
<dbReference type="HPA" id="ENSG00000144029">
    <property type="expression patterns" value="Low tissue specificity"/>
</dbReference>
<dbReference type="MIM" id="611972">
    <property type="type" value="gene"/>
</dbReference>
<dbReference type="neXtProt" id="NX_P82675"/>
<dbReference type="OpenTargets" id="ENSG00000144029"/>
<dbReference type="PharmGKB" id="PA31024"/>
<dbReference type="VEuPathDB" id="HostDB:ENSG00000144029"/>
<dbReference type="eggNOG" id="KOG2646">
    <property type="taxonomic scope" value="Eukaryota"/>
</dbReference>
<dbReference type="GeneTree" id="ENSGT00390000001878"/>
<dbReference type="HOGENOM" id="CLU_050434_0_0_1"/>
<dbReference type="InParanoid" id="P82675"/>
<dbReference type="OMA" id="LICHRAI"/>
<dbReference type="OrthoDB" id="309483at2759"/>
<dbReference type="PAN-GO" id="P82675">
    <property type="GO annotations" value="3 GO annotations based on evolutionary models"/>
</dbReference>
<dbReference type="PhylomeDB" id="P82675"/>
<dbReference type="TreeFam" id="TF313823"/>
<dbReference type="PathwayCommons" id="P82675"/>
<dbReference type="Reactome" id="R-HSA-5368286">
    <property type="pathway name" value="Mitochondrial translation initiation"/>
</dbReference>
<dbReference type="Reactome" id="R-HSA-5389840">
    <property type="pathway name" value="Mitochondrial translation elongation"/>
</dbReference>
<dbReference type="Reactome" id="R-HSA-5419276">
    <property type="pathway name" value="Mitochondrial translation termination"/>
</dbReference>
<dbReference type="SignaLink" id="P82675"/>
<dbReference type="SIGNOR" id="P82675"/>
<dbReference type="BioGRID-ORCS" id="64969">
    <property type="hits" value="516 hits in 1177 CRISPR screens"/>
</dbReference>
<dbReference type="ChiTaRS" id="MRPS5">
    <property type="organism name" value="human"/>
</dbReference>
<dbReference type="GeneWiki" id="MRPS5"/>
<dbReference type="GenomeRNAi" id="64969"/>
<dbReference type="Pharos" id="P82675">
    <property type="development level" value="Tbio"/>
</dbReference>
<dbReference type="PRO" id="PR:P82675"/>
<dbReference type="Proteomes" id="UP000005640">
    <property type="component" value="Chromosome 2"/>
</dbReference>
<dbReference type="RNAct" id="P82675">
    <property type="molecule type" value="protein"/>
</dbReference>
<dbReference type="Bgee" id="ENSG00000144029">
    <property type="expression patterns" value="Expressed in left ventricle myocardium and 189 other cell types or tissues"/>
</dbReference>
<dbReference type="GO" id="GO:0005743">
    <property type="term" value="C:mitochondrial inner membrane"/>
    <property type="evidence" value="ECO:0000304"/>
    <property type="project" value="Reactome"/>
</dbReference>
<dbReference type="GO" id="GO:0005763">
    <property type="term" value="C:mitochondrial small ribosomal subunit"/>
    <property type="evidence" value="ECO:0000314"/>
    <property type="project" value="UniProtKB"/>
</dbReference>
<dbReference type="GO" id="GO:0005739">
    <property type="term" value="C:mitochondrion"/>
    <property type="evidence" value="ECO:0000314"/>
    <property type="project" value="HPA"/>
</dbReference>
<dbReference type="GO" id="GO:0003723">
    <property type="term" value="F:RNA binding"/>
    <property type="evidence" value="ECO:0007005"/>
    <property type="project" value="UniProtKB"/>
</dbReference>
<dbReference type="GO" id="GO:0003735">
    <property type="term" value="F:structural constituent of ribosome"/>
    <property type="evidence" value="ECO:0000318"/>
    <property type="project" value="GO_Central"/>
</dbReference>
<dbReference type="GO" id="GO:0032543">
    <property type="term" value="P:mitochondrial translation"/>
    <property type="evidence" value="ECO:0000303"/>
    <property type="project" value="ComplexPortal"/>
</dbReference>
<dbReference type="GO" id="GO:0006412">
    <property type="term" value="P:translation"/>
    <property type="evidence" value="ECO:0000318"/>
    <property type="project" value="GO_Central"/>
</dbReference>
<dbReference type="FunFam" id="3.30.160.20:FF:000022">
    <property type="entry name" value="28S ribosomal protein S5, mitochondrial"/>
    <property type="match status" value="1"/>
</dbReference>
<dbReference type="FunFam" id="3.30.230.10:FF:000002">
    <property type="entry name" value="30S ribosomal protein S5"/>
    <property type="match status" value="1"/>
</dbReference>
<dbReference type="Gene3D" id="3.30.160.20">
    <property type="match status" value="1"/>
</dbReference>
<dbReference type="Gene3D" id="3.30.230.10">
    <property type="match status" value="1"/>
</dbReference>
<dbReference type="InterPro" id="IPR020568">
    <property type="entry name" value="Ribosomal_Su5_D2-typ_SF"/>
</dbReference>
<dbReference type="InterPro" id="IPR000851">
    <property type="entry name" value="Ribosomal_uS5"/>
</dbReference>
<dbReference type="InterPro" id="IPR005324">
    <property type="entry name" value="Ribosomal_uS5_C"/>
</dbReference>
<dbReference type="InterPro" id="IPR013810">
    <property type="entry name" value="Ribosomal_uS5_N"/>
</dbReference>
<dbReference type="InterPro" id="IPR018192">
    <property type="entry name" value="Ribosomal_uS5_N_CS"/>
</dbReference>
<dbReference type="InterPro" id="IPR048584">
    <property type="entry name" value="Ribosomal_uS5m_N"/>
</dbReference>
<dbReference type="InterPro" id="IPR014721">
    <property type="entry name" value="Ribsml_uS5_D2-typ_fold_subgr"/>
</dbReference>
<dbReference type="PANTHER" id="PTHR48277">
    <property type="entry name" value="MITOCHONDRIAL RIBOSOMAL PROTEIN S5"/>
    <property type="match status" value="1"/>
</dbReference>
<dbReference type="PANTHER" id="PTHR48277:SF1">
    <property type="entry name" value="MITOCHONDRIAL RIBOSOMAL PROTEIN S5"/>
    <property type="match status" value="1"/>
</dbReference>
<dbReference type="Pfam" id="PF00333">
    <property type="entry name" value="Ribosomal_S5"/>
    <property type="match status" value="1"/>
</dbReference>
<dbReference type="Pfam" id="PF03719">
    <property type="entry name" value="Ribosomal_S5_C"/>
    <property type="match status" value="1"/>
</dbReference>
<dbReference type="Pfam" id="PF21251">
    <property type="entry name" value="Ribosomal_uS5m_N"/>
    <property type="match status" value="1"/>
</dbReference>
<dbReference type="SUPFAM" id="SSF54768">
    <property type="entry name" value="dsRNA-binding domain-like"/>
    <property type="match status" value="1"/>
</dbReference>
<dbReference type="SUPFAM" id="SSF54211">
    <property type="entry name" value="Ribosomal protein S5 domain 2-like"/>
    <property type="match status" value="1"/>
</dbReference>
<dbReference type="PROSITE" id="PS00585">
    <property type="entry name" value="RIBOSOMAL_S5"/>
    <property type="match status" value="1"/>
</dbReference>
<dbReference type="PROSITE" id="PS50881">
    <property type="entry name" value="S5_DSRBD"/>
    <property type="match status" value="1"/>
</dbReference>
<gene>
    <name type="primary">MRPS5</name>
</gene>
<reference key="1">
    <citation type="journal article" date="2001" name="J. Biol. Chem.">
        <title>Proteomic analysis of the mammalian mitochondrial ribosome. Identification of protein components in the 28S small subunit.</title>
        <authorList>
            <person name="Suzuki T."/>
            <person name="Terasaki M."/>
            <person name="Takemoto-Hori C."/>
            <person name="Hanada T."/>
            <person name="Ueda T."/>
            <person name="Wada A."/>
            <person name="Watanabe K."/>
        </authorList>
    </citation>
    <scope>NUCLEOTIDE SEQUENCE [MRNA] (ISOFORM 1)</scope>
</reference>
<reference key="2">
    <citation type="journal article" date="2004" name="Nat. Genet.">
        <title>Complete sequencing and characterization of 21,243 full-length human cDNAs.</title>
        <authorList>
            <person name="Ota T."/>
            <person name="Suzuki Y."/>
            <person name="Nishikawa T."/>
            <person name="Otsuki T."/>
            <person name="Sugiyama T."/>
            <person name="Irie R."/>
            <person name="Wakamatsu A."/>
            <person name="Hayashi K."/>
            <person name="Sato H."/>
            <person name="Nagai K."/>
            <person name="Kimura K."/>
            <person name="Makita H."/>
            <person name="Sekine M."/>
            <person name="Obayashi M."/>
            <person name="Nishi T."/>
            <person name="Shibahara T."/>
            <person name="Tanaka T."/>
            <person name="Ishii S."/>
            <person name="Yamamoto J."/>
            <person name="Saito K."/>
            <person name="Kawai Y."/>
            <person name="Isono Y."/>
            <person name="Nakamura Y."/>
            <person name="Nagahari K."/>
            <person name="Murakami K."/>
            <person name="Yasuda T."/>
            <person name="Iwayanagi T."/>
            <person name="Wagatsuma M."/>
            <person name="Shiratori A."/>
            <person name="Sudo H."/>
            <person name="Hosoiri T."/>
            <person name="Kaku Y."/>
            <person name="Kodaira H."/>
            <person name="Kondo H."/>
            <person name="Sugawara M."/>
            <person name="Takahashi M."/>
            <person name="Kanda K."/>
            <person name="Yokoi T."/>
            <person name="Furuya T."/>
            <person name="Kikkawa E."/>
            <person name="Omura Y."/>
            <person name="Abe K."/>
            <person name="Kamihara K."/>
            <person name="Katsuta N."/>
            <person name="Sato K."/>
            <person name="Tanikawa M."/>
            <person name="Yamazaki M."/>
            <person name="Ninomiya K."/>
            <person name="Ishibashi T."/>
            <person name="Yamashita H."/>
            <person name="Murakawa K."/>
            <person name="Fujimori K."/>
            <person name="Tanai H."/>
            <person name="Kimata M."/>
            <person name="Watanabe M."/>
            <person name="Hiraoka S."/>
            <person name="Chiba Y."/>
            <person name="Ishida S."/>
            <person name="Ono Y."/>
            <person name="Takiguchi S."/>
            <person name="Watanabe S."/>
            <person name="Yosida M."/>
            <person name="Hotuta T."/>
            <person name="Kusano J."/>
            <person name="Kanehori K."/>
            <person name="Takahashi-Fujii A."/>
            <person name="Hara H."/>
            <person name="Tanase T.-O."/>
            <person name="Nomura Y."/>
            <person name="Togiya S."/>
            <person name="Komai F."/>
            <person name="Hara R."/>
            <person name="Takeuchi K."/>
            <person name="Arita M."/>
            <person name="Imose N."/>
            <person name="Musashino K."/>
            <person name="Yuuki H."/>
            <person name="Oshima A."/>
            <person name="Sasaki N."/>
            <person name="Aotsuka S."/>
            <person name="Yoshikawa Y."/>
            <person name="Matsunawa H."/>
            <person name="Ichihara T."/>
            <person name="Shiohata N."/>
            <person name="Sano S."/>
            <person name="Moriya S."/>
            <person name="Momiyama H."/>
            <person name="Satoh N."/>
            <person name="Takami S."/>
            <person name="Terashima Y."/>
            <person name="Suzuki O."/>
            <person name="Nakagawa S."/>
            <person name="Senoh A."/>
            <person name="Mizoguchi H."/>
            <person name="Goto Y."/>
            <person name="Shimizu F."/>
            <person name="Wakebe H."/>
            <person name="Hishigaki H."/>
            <person name="Watanabe T."/>
            <person name="Sugiyama A."/>
            <person name="Takemoto M."/>
            <person name="Kawakami B."/>
            <person name="Yamazaki M."/>
            <person name="Watanabe K."/>
            <person name="Kumagai A."/>
            <person name="Itakura S."/>
            <person name="Fukuzumi Y."/>
            <person name="Fujimori Y."/>
            <person name="Komiyama M."/>
            <person name="Tashiro H."/>
            <person name="Tanigami A."/>
            <person name="Fujiwara T."/>
            <person name="Ono T."/>
            <person name="Yamada K."/>
            <person name="Fujii Y."/>
            <person name="Ozaki K."/>
            <person name="Hirao M."/>
            <person name="Ohmori Y."/>
            <person name="Kawabata A."/>
            <person name="Hikiji T."/>
            <person name="Kobatake N."/>
            <person name="Inagaki H."/>
            <person name="Ikema Y."/>
            <person name="Okamoto S."/>
            <person name="Okitani R."/>
            <person name="Kawakami T."/>
            <person name="Noguchi S."/>
            <person name="Itoh T."/>
            <person name="Shigeta K."/>
            <person name="Senba T."/>
            <person name="Matsumura K."/>
            <person name="Nakajima Y."/>
            <person name="Mizuno T."/>
            <person name="Morinaga M."/>
            <person name="Sasaki M."/>
            <person name="Togashi T."/>
            <person name="Oyama M."/>
            <person name="Hata H."/>
            <person name="Watanabe M."/>
            <person name="Komatsu T."/>
            <person name="Mizushima-Sugano J."/>
            <person name="Satoh T."/>
            <person name="Shirai Y."/>
            <person name="Takahashi Y."/>
            <person name="Nakagawa K."/>
            <person name="Okumura K."/>
            <person name="Nagase T."/>
            <person name="Nomura N."/>
            <person name="Kikuchi H."/>
            <person name="Masuho Y."/>
            <person name="Yamashita R."/>
            <person name="Nakai K."/>
            <person name="Yada T."/>
            <person name="Nakamura Y."/>
            <person name="Ohara O."/>
            <person name="Isogai T."/>
            <person name="Sugano S."/>
        </authorList>
    </citation>
    <scope>NUCLEOTIDE SEQUENCE [LARGE SCALE MRNA] (ISOFORM 2)</scope>
    <source>
        <tissue>Testis</tissue>
    </source>
</reference>
<reference key="3">
    <citation type="journal article" date="2005" name="Nature">
        <title>Generation and annotation of the DNA sequences of human chromosomes 2 and 4.</title>
        <authorList>
            <person name="Hillier L.W."/>
            <person name="Graves T.A."/>
            <person name="Fulton R.S."/>
            <person name="Fulton L.A."/>
            <person name="Pepin K.H."/>
            <person name="Minx P."/>
            <person name="Wagner-McPherson C."/>
            <person name="Layman D."/>
            <person name="Wylie K."/>
            <person name="Sekhon M."/>
            <person name="Becker M.C."/>
            <person name="Fewell G.A."/>
            <person name="Delehaunty K.D."/>
            <person name="Miner T.L."/>
            <person name="Nash W.E."/>
            <person name="Kremitzki C."/>
            <person name="Oddy L."/>
            <person name="Du H."/>
            <person name="Sun H."/>
            <person name="Bradshaw-Cordum H."/>
            <person name="Ali J."/>
            <person name="Carter J."/>
            <person name="Cordes M."/>
            <person name="Harris A."/>
            <person name="Isak A."/>
            <person name="van Brunt A."/>
            <person name="Nguyen C."/>
            <person name="Du F."/>
            <person name="Courtney L."/>
            <person name="Kalicki J."/>
            <person name="Ozersky P."/>
            <person name="Abbott S."/>
            <person name="Armstrong J."/>
            <person name="Belter E.A."/>
            <person name="Caruso L."/>
            <person name="Cedroni M."/>
            <person name="Cotton M."/>
            <person name="Davidson T."/>
            <person name="Desai A."/>
            <person name="Elliott G."/>
            <person name="Erb T."/>
            <person name="Fronick C."/>
            <person name="Gaige T."/>
            <person name="Haakenson W."/>
            <person name="Haglund K."/>
            <person name="Holmes A."/>
            <person name="Harkins R."/>
            <person name="Kim K."/>
            <person name="Kruchowski S.S."/>
            <person name="Strong C.M."/>
            <person name="Grewal N."/>
            <person name="Goyea E."/>
            <person name="Hou S."/>
            <person name="Levy A."/>
            <person name="Martinka S."/>
            <person name="Mead K."/>
            <person name="McLellan M.D."/>
            <person name="Meyer R."/>
            <person name="Randall-Maher J."/>
            <person name="Tomlinson C."/>
            <person name="Dauphin-Kohlberg S."/>
            <person name="Kozlowicz-Reilly A."/>
            <person name="Shah N."/>
            <person name="Swearengen-Shahid S."/>
            <person name="Snider J."/>
            <person name="Strong J.T."/>
            <person name="Thompson J."/>
            <person name="Yoakum M."/>
            <person name="Leonard S."/>
            <person name="Pearman C."/>
            <person name="Trani L."/>
            <person name="Radionenko M."/>
            <person name="Waligorski J.E."/>
            <person name="Wang C."/>
            <person name="Rock S.M."/>
            <person name="Tin-Wollam A.-M."/>
            <person name="Maupin R."/>
            <person name="Latreille P."/>
            <person name="Wendl M.C."/>
            <person name="Yang S.-P."/>
            <person name="Pohl C."/>
            <person name="Wallis J.W."/>
            <person name="Spieth J."/>
            <person name="Bieri T.A."/>
            <person name="Berkowicz N."/>
            <person name="Nelson J.O."/>
            <person name="Osborne J."/>
            <person name="Ding L."/>
            <person name="Meyer R."/>
            <person name="Sabo A."/>
            <person name="Shotland Y."/>
            <person name="Sinha P."/>
            <person name="Wohldmann P.E."/>
            <person name="Cook L.L."/>
            <person name="Hickenbotham M.T."/>
            <person name="Eldred J."/>
            <person name="Williams D."/>
            <person name="Jones T.A."/>
            <person name="She X."/>
            <person name="Ciccarelli F.D."/>
            <person name="Izaurralde E."/>
            <person name="Taylor J."/>
            <person name="Schmutz J."/>
            <person name="Myers R.M."/>
            <person name="Cox D.R."/>
            <person name="Huang X."/>
            <person name="McPherson J.D."/>
            <person name="Mardis E.R."/>
            <person name="Clifton S.W."/>
            <person name="Warren W.C."/>
            <person name="Chinwalla A.T."/>
            <person name="Eddy S.R."/>
            <person name="Marra M.A."/>
            <person name="Ovcharenko I."/>
            <person name="Furey T.S."/>
            <person name="Miller W."/>
            <person name="Eichler E.E."/>
            <person name="Bork P."/>
            <person name="Suyama M."/>
            <person name="Torrents D."/>
            <person name="Waterston R.H."/>
            <person name="Wilson R.K."/>
        </authorList>
    </citation>
    <scope>NUCLEOTIDE SEQUENCE [LARGE SCALE GENOMIC DNA]</scope>
</reference>
<reference key="4">
    <citation type="submission" date="2005-07" db="EMBL/GenBank/DDBJ databases">
        <authorList>
            <person name="Mural R.J."/>
            <person name="Istrail S."/>
            <person name="Sutton G.G."/>
            <person name="Florea L."/>
            <person name="Halpern A.L."/>
            <person name="Mobarry C.M."/>
            <person name="Lippert R."/>
            <person name="Walenz B."/>
            <person name="Shatkay H."/>
            <person name="Dew I."/>
            <person name="Miller J.R."/>
            <person name="Flanigan M.J."/>
            <person name="Edwards N.J."/>
            <person name="Bolanos R."/>
            <person name="Fasulo D."/>
            <person name="Halldorsson B.V."/>
            <person name="Hannenhalli S."/>
            <person name="Turner R."/>
            <person name="Yooseph S."/>
            <person name="Lu F."/>
            <person name="Nusskern D.R."/>
            <person name="Shue B.C."/>
            <person name="Zheng X.H."/>
            <person name="Zhong F."/>
            <person name="Delcher A.L."/>
            <person name="Huson D.H."/>
            <person name="Kravitz S.A."/>
            <person name="Mouchard L."/>
            <person name="Reinert K."/>
            <person name="Remington K.A."/>
            <person name="Clark A.G."/>
            <person name="Waterman M.S."/>
            <person name="Eichler E.E."/>
            <person name="Adams M.D."/>
            <person name="Hunkapiller M.W."/>
            <person name="Myers E.W."/>
            <person name="Venter J.C."/>
        </authorList>
    </citation>
    <scope>NUCLEOTIDE SEQUENCE [LARGE SCALE GENOMIC DNA]</scope>
</reference>
<reference key="5">
    <citation type="journal article" date="2004" name="Genome Res.">
        <title>The status, quality, and expansion of the NIH full-length cDNA project: the Mammalian Gene Collection (MGC).</title>
        <authorList>
            <consortium name="The MGC Project Team"/>
        </authorList>
    </citation>
    <scope>NUCLEOTIDE SEQUENCE [LARGE SCALE MRNA] (ISOFORM 1)</scope>
    <source>
        <tissue>Kidney</tissue>
        <tissue>Retina</tissue>
    </source>
</reference>
<reference key="6">
    <citation type="journal article" date="2001" name="J. Biol. Chem.">
        <title>The small subunit of the mammalian mitochondrial ribosome: identification of the full complement of ribosomal proteins present.</title>
        <authorList>
            <person name="Koc E.C."/>
            <person name="Burkhart W."/>
            <person name="Blackburn K."/>
            <person name="Moseley A."/>
            <person name="Spremulli L.L."/>
        </authorList>
    </citation>
    <scope>IDENTIFICATION</scope>
</reference>
<reference key="7">
    <citation type="journal article" date="2011" name="BMC Syst. Biol.">
        <title>Initial characterization of the human central proteome.</title>
        <authorList>
            <person name="Burkard T.R."/>
            <person name="Planyavsky M."/>
            <person name="Kaupe I."/>
            <person name="Breitwieser F.P."/>
            <person name="Buerckstuemmer T."/>
            <person name="Bennett K.L."/>
            <person name="Superti-Furga G."/>
            <person name="Colinge J."/>
        </authorList>
    </citation>
    <scope>IDENTIFICATION BY MASS SPECTROMETRY [LARGE SCALE ANALYSIS]</scope>
</reference>
<reference key="8">
    <citation type="journal article" date="2015" name="Proteomics">
        <title>N-terminome analysis of the human mitochondrial proteome.</title>
        <authorList>
            <person name="Vaca Jacome A.S."/>
            <person name="Rabilloud T."/>
            <person name="Schaeffer-Reiss C."/>
            <person name="Rompais M."/>
            <person name="Ayoub D."/>
            <person name="Lane L."/>
            <person name="Bairoch A."/>
            <person name="Van Dorsselaer A."/>
            <person name="Carapito C."/>
        </authorList>
    </citation>
    <scope>IDENTIFICATION BY MASS SPECTROMETRY [LARGE SCALE ANALYSIS]</scope>
</reference>
<reference evidence="6" key="9">
    <citation type="journal article" date="2015" name="Science">
        <title>Ribosome. The structure of the human mitochondrial ribosome.</title>
        <authorList>
            <person name="Amunts A."/>
            <person name="Brown A."/>
            <person name="Toots J."/>
            <person name="Scheres S.H."/>
            <person name="Ramakrishnan V."/>
        </authorList>
    </citation>
    <scope>STRUCTURE BY ELECTRON MICROSCOPY (3.50 ANGSTROMS)</scope>
    <scope>SUBCELLULAR LOCATION</scope>
    <scope>SUBUNIT</scope>
</reference>
<protein>
    <recommendedName>
        <fullName evidence="4">Small ribosomal subunit protein uS5m</fullName>
    </recommendedName>
    <alternativeName>
        <fullName>28S ribosomal protein S5, mitochondrial</fullName>
        <shortName>MRP-S5</shortName>
        <shortName>S5mt</shortName>
    </alternativeName>
</protein>
<organism>
    <name type="scientific">Homo sapiens</name>
    <name type="common">Human</name>
    <dbReference type="NCBI Taxonomy" id="9606"/>
    <lineage>
        <taxon>Eukaryota</taxon>
        <taxon>Metazoa</taxon>
        <taxon>Chordata</taxon>
        <taxon>Craniata</taxon>
        <taxon>Vertebrata</taxon>
        <taxon>Euteleostomi</taxon>
        <taxon>Mammalia</taxon>
        <taxon>Eutheria</taxon>
        <taxon>Euarchontoglires</taxon>
        <taxon>Primates</taxon>
        <taxon>Haplorrhini</taxon>
        <taxon>Catarrhini</taxon>
        <taxon>Hominidae</taxon>
        <taxon>Homo</taxon>
    </lineage>
</organism>
<feature type="chain" id="PRO_0000131685" description="Small ribosomal subunit protein uS5m">
    <location>
        <begin position="1"/>
        <end position="430"/>
    </location>
</feature>
<feature type="domain" description="S5 DRBM" evidence="1">
    <location>
        <begin position="218"/>
        <end position="282"/>
    </location>
</feature>
<feature type="splice variant" id="VSP_005725" description="In isoform 2." evidence="3">
    <original>RNVFTMTAKEGRKKSIRVLVAVGNGK</original>
    <variation>FLLGKLLIGWMLSGKQRTEQFTICII</variation>
    <location>
        <begin position="226"/>
        <end position="251"/>
    </location>
</feature>
<feature type="splice variant" id="VSP_005726" description="In isoform 2." evidence="3">
    <location>
        <begin position="252"/>
        <end position="430"/>
    </location>
</feature>
<feature type="helix" evidence="8">
    <location>
        <begin position="89"/>
        <end position="91"/>
    </location>
</feature>
<feature type="helix" evidence="9">
    <location>
        <begin position="95"/>
        <end position="103"/>
    </location>
</feature>
<feature type="helix" evidence="9">
    <location>
        <begin position="108"/>
        <end position="111"/>
    </location>
</feature>
<feature type="turn" evidence="9">
    <location>
        <begin position="126"/>
        <end position="129"/>
    </location>
</feature>
<feature type="turn" evidence="9">
    <location>
        <begin position="143"/>
        <end position="145"/>
    </location>
</feature>
<feature type="strand" evidence="9">
    <location>
        <begin position="148"/>
        <end position="150"/>
    </location>
</feature>
<feature type="helix" evidence="9">
    <location>
        <begin position="162"/>
        <end position="182"/>
    </location>
</feature>
<feature type="strand" evidence="9">
    <location>
        <begin position="193"/>
        <end position="196"/>
    </location>
</feature>
<feature type="turn" evidence="9">
    <location>
        <begin position="210"/>
        <end position="212"/>
    </location>
</feature>
<feature type="strand" evidence="7">
    <location>
        <begin position="219"/>
        <end position="228"/>
    </location>
</feature>
<feature type="strand" evidence="9">
    <location>
        <begin position="233"/>
        <end position="235"/>
    </location>
</feature>
<feature type="strand" evidence="7">
    <location>
        <begin position="240"/>
        <end position="248"/>
    </location>
</feature>
<feature type="strand" evidence="7">
    <location>
        <begin position="250"/>
        <end position="263"/>
    </location>
</feature>
<feature type="helix" evidence="7">
    <location>
        <begin position="264"/>
        <end position="276"/>
    </location>
</feature>
<feature type="turn" evidence="7">
    <location>
        <begin position="286"/>
        <end position="288"/>
    </location>
</feature>
<feature type="strand" evidence="7">
    <location>
        <begin position="294"/>
        <end position="298"/>
    </location>
</feature>
<feature type="strand" evidence="7">
    <location>
        <begin position="301"/>
        <end position="307"/>
    </location>
</feature>
<feature type="strand" evidence="7">
    <location>
        <begin position="314"/>
        <end position="316"/>
    </location>
</feature>
<feature type="helix" evidence="7">
    <location>
        <begin position="318"/>
        <end position="327"/>
    </location>
</feature>
<feature type="strand" evidence="7">
    <location>
        <begin position="331"/>
        <end position="338"/>
    </location>
</feature>
<feature type="helix" evidence="7">
    <location>
        <begin position="342"/>
        <end position="354"/>
    </location>
</feature>
<feature type="helix" evidence="7">
    <location>
        <begin position="359"/>
        <end position="366"/>
    </location>
</feature>
<feature type="strand" evidence="7">
    <location>
        <begin position="368"/>
        <end position="373"/>
    </location>
</feature>
<feature type="helix" evidence="7">
    <location>
        <begin position="375"/>
        <end position="377"/>
    </location>
</feature>
<feature type="strand" evidence="7">
    <location>
        <begin position="382"/>
        <end position="385"/>
    </location>
</feature>
<feature type="helix" evidence="7">
    <location>
        <begin position="408"/>
        <end position="414"/>
    </location>
</feature>
<feature type="turn" evidence="7">
    <location>
        <begin position="421"/>
        <end position="424"/>
    </location>
</feature>
<sequence length="430" mass="48006">MATAVRAVGCLPVLCSGTAGHLLGRQCSLNTLPAASILAWKSVLGNGHLSSLGTRDTHPYASLSRALQTQCCISSPSHLMSQQYRPYSFFTKLTADELWKGALAETGAGAKKGRGKRTKKKKRKDLNRGQIIGEGRYGFLWPGLNVPLMKNGAVQTIAQRSKEEQEKVEADMIQQREEWDRKKKMKVKRERGWSGNSWGGISLGPPDPGPCGETYEDFDTRILEVRNVFTMTAKEGRKKSIRVLVAVGNGKGAAGFSIGKATDRMDAFRKAKNRAVHHLHYIERYEDHTIFHDISLRFKRTHIKMKKQPKGYGLRCHRAIITICRLIGIKDMYAKVSGSINMLSLTQGLFRGLSRQETHQQLADKKGLHVVEIREECGPLPIVVASPRGPLRKDPEPEDEVPDVKLDWEDVKTAQGMKRSVWSNLKRAAT</sequence>
<name>RT05_HUMAN</name>
<accession>P82675</accession>
<accession>Q4ZFY5</accession>
<accession>Q96LJ6</accession>
<accession>Q9BWI4</accession>
<accession>Q9BYC4</accession>
<comment type="subunit">
    <text evidence="2">Component of the mitochondrial small ribosomal subunit (mt-SSU). Mature mammalian 55S mitochondrial ribosomes consist of a small (28S) and a large (39S) subunit. The 28S small subunit contains a 12S ribosomal RNA (12S mt-rRNA) and 30 different proteins. The 39S large subunit contains a 16S rRNA (16S mt-rRNA), a copy of mitochondrial valine transfer RNA (mt-tRNA(Val)), which plays an integral structural role, and 52 different proteins.</text>
</comment>
<comment type="subcellular location">
    <subcellularLocation>
        <location evidence="2">Mitochondrion</location>
    </subcellularLocation>
</comment>
<comment type="alternative products">
    <event type="alternative splicing"/>
    <isoform>
        <id>P82675-1</id>
        <name>1</name>
        <sequence type="displayed"/>
    </isoform>
    <isoform>
        <id>P82675-2</id>
        <name>2</name>
        <sequence type="described" ref="VSP_005725 VSP_005726"/>
    </isoform>
</comment>
<comment type="miscellaneous">
    <molecule>Isoform 2</molecule>
    <text evidence="5">May be produced at very low levels due to a premature stop codon in the mRNA, leading to nonsense-mediated mRNA decay.</text>
</comment>
<comment type="similarity">
    <text evidence="5">Belongs to the universal ribosomal protein uS5 family.</text>
</comment>
<proteinExistence type="evidence at protein level"/>
<evidence type="ECO:0000255" key="1">
    <source>
        <dbReference type="PROSITE-ProRule" id="PRU00268"/>
    </source>
</evidence>
<evidence type="ECO:0000269" key="2">
    <source>
    </source>
</evidence>
<evidence type="ECO:0000303" key="3">
    <source>
    </source>
</evidence>
<evidence type="ECO:0000303" key="4">
    <source>
    </source>
</evidence>
<evidence type="ECO:0000305" key="5"/>
<evidence type="ECO:0007744" key="6">
    <source>
        <dbReference type="PDB" id="3J9M"/>
    </source>
</evidence>
<evidence type="ECO:0007829" key="7">
    <source>
        <dbReference type="PDB" id="8CSS"/>
    </source>
</evidence>
<evidence type="ECO:0007829" key="8">
    <source>
        <dbReference type="PDB" id="8QRL"/>
    </source>
</evidence>
<evidence type="ECO:0007829" key="9">
    <source>
        <dbReference type="PDB" id="8QRN"/>
    </source>
</evidence>